<keyword id="KW-0150">Chloroplast</keyword>
<keyword id="KW-0472">Membrane</keyword>
<keyword id="KW-0602">Photosynthesis</keyword>
<keyword id="KW-0604">Photosystem II</keyword>
<keyword id="KW-0934">Plastid</keyword>
<keyword id="KW-0674">Reaction center</keyword>
<keyword id="KW-1185">Reference proteome</keyword>
<keyword id="KW-0793">Thylakoid</keyword>
<keyword id="KW-0812">Transmembrane</keyword>
<keyword id="KW-1133">Transmembrane helix</keyword>
<sequence>MTIAFQLAVFALIVTSSVLVISVPLVFASPDGWSNNKNVVFSGTSLWIGLVFLVAILNSLIS</sequence>
<feature type="chain" id="PRO_0000217719" description="Photosystem II reaction center protein Z">
    <location>
        <begin position="1"/>
        <end position="62"/>
    </location>
</feature>
<feature type="transmembrane region" description="Helical" evidence="1">
    <location>
        <begin position="8"/>
        <end position="28"/>
    </location>
</feature>
<feature type="transmembrane region" description="Helical" evidence="1">
    <location>
        <begin position="41"/>
        <end position="61"/>
    </location>
</feature>
<protein>
    <recommendedName>
        <fullName evidence="1">Photosystem II reaction center protein Z</fullName>
        <shortName evidence="1">PSII-Z</shortName>
    </recommendedName>
</protein>
<name>PSBZ_ORYNI</name>
<comment type="function">
    <text evidence="1">May control the interaction of photosystem II (PSII) cores with the light-harvesting antenna, regulates electron flow through the 2 photosystem reaction centers. PSII is a light-driven water plastoquinone oxidoreductase, using light energy to abstract electrons from H(2)O, generating a proton gradient subsequently used for ATP formation.</text>
</comment>
<comment type="subunit">
    <text evidence="1">PSII is composed of 1 copy each of membrane proteins PsbA, PsbB, PsbC, PsbD, PsbE, PsbF, PsbH, PsbI, PsbJ, PsbK, PsbL, PsbM, PsbT, PsbY, PsbZ, Psb30/Ycf12, at least 3 peripheral proteins of the oxygen-evolving complex and a large number of cofactors. It forms dimeric complexes.</text>
</comment>
<comment type="subcellular location">
    <subcellularLocation>
        <location evidence="1">Plastid</location>
        <location evidence="1">Chloroplast thylakoid membrane</location>
        <topology evidence="1">Multi-pass membrane protein</topology>
    </subcellularLocation>
</comment>
<comment type="similarity">
    <text evidence="1">Belongs to the PsbZ family.</text>
</comment>
<geneLocation type="chloroplast"/>
<proteinExistence type="inferred from homology"/>
<reference key="1">
    <citation type="journal article" date="2004" name="Gene">
        <title>The complete nucleotide sequence of wild rice (Oryza nivara) chloroplast genome: first genome wide comparative sequence analysis of wild and cultivated rice.</title>
        <authorList>
            <person name="Masood M.S."/>
            <person name="Nishikawa T."/>
            <person name="Fukuoka S."/>
            <person name="Njenga P.K."/>
            <person name="Tsudzuki T."/>
            <person name="Kadowaki K."/>
        </authorList>
    </citation>
    <scope>NUCLEOTIDE SEQUENCE [LARGE SCALE GENOMIC DNA]</scope>
    <source>
        <strain evidence="2">cv. SL10</strain>
    </source>
</reference>
<evidence type="ECO:0000255" key="1">
    <source>
        <dbReference type="HAMAP-Rule" id="MF_00644"/>
    </source>
</evidence>
<evidence type="ECO:0000312" key="2">
    <source>
        <dbReference type="Proteomes" id="UP000006591"/>
    </source>
</evidence>
<gene>
    <name evidence="1" type="primary">psbZ</name>
</gene>
<organism>
    <name type="scientific">Oryza nivara</name>
    <name type="common">Indian wild rice</name>
    <name type="synonym">Oryza sativa f. spontanea</name>
    <dbReference type="NCBI Taxonomy" id="4536"/>
    <lineage>
        <taxon>Eukaryota</taxon>
        <taxon>Viridiplantae</taxon>
        <taxon>Streptophyta</taxon>
        <taxon>Embryophyta</taxon>
        <taxon>Tracheophyta</taxon>
        <taxon>Spermatophyta</taxon>
        <taxon>Magnoliopsida</taxon>
        <taxon>Liliopsida</taxon>
        <taxon>Poales</taxon>
        <taxon>Poaceae</taxon>
        <taxon>BOP clade</taxon>
        <taxon>Oryzoideae</taxon>
        <taxon>Oryzeae</taxon>
        <taxon>Oryzinae</taxon>
        <taxon>Oryza</taxon>
    </lineage>
</organism>
<accession>Q6ENI9</accession>
<dbReference type="EMBL" id="AP006728">
    <property type="protein sequence ID" value="BAD26763.1"/>
    <property type="molecule type" value="Genomic_DNA"/>
</dbReference>
<dbReference type="RefSeq" id="YP_052734.1">
    <property type="nucleotide sequence ID" value="NC_005973.1"/>
</dbReference>
<dbReference type="SMR" id="Q6ENI9"/>
<dbReference type="STRING" id="4536.Q6ENI9"/>
<dbReference type="GeneID" id="2885893"/>
<dbReference type="Proteomes" id="UP000006591">
    <property type="component" value="Chloroplast"/>
</dbReference>
<dbReference type="GO" id="GO:0009535">
    <property type="term" value="C:chloroplast thylakoid membrane"/>
    <property type="evidence" value="ECO:0007669"/>
    <property type="project" value="UniProtKB-SubCell"/>
</dbReference>
<dbReference type="GO" id="GO:0009539">
    <property type="term" value="C:photosystem II reaction center"/>
    <property type="evidence" value="ECO:0007669"/>
    <property type="project" value="InterPro"/>
</dbReference>
<dbReference type="GO" id="GO:0009536">
    <property type="term" value="C:plastid"/>
    <property type="evidence" value="ECO:0000305"/>
    <property type="project" value="Gramene"/>
</dbReference>
<dbReference type="GO" id="GO:0015979">
    <property type="term" value="P:photosynthesis"/>
    <property type="evidence" value="ECO:0007669"/>
    <property type="project" value="UniProtKB-UniRule"/>
</dbReference>
<dbReference type="GO" id="GO:0042549">
    <property type="term" value="P:photosystem II stabilization"/>
    <property type="evidence" value="ECO:0007669"/>
    <property type="project" value="InterPro"/>
</dbReference>
<dbReference type="FunFam" id="1.10.287.740:FF:000001">
    <property type="entry name" value="Photosystem II reaction center protein Z"/>
    <property type="match status" value="1"/>
</dbReference>
<dbReference type="Gene3D" id="1.10.287.740">
    <property type="entry name" value="Photosystem II PsbZ, reaction centre"/>
    <property type="match status" value="1"/>
</dbReference>
<dbReference type="HAMAP" id="MF_00644">
    <property type="entry name" value="PSII_PsbZ"/>
    <property type="match status" value="1"/>
</dbReference>
<dbReference type="InterPro" id="IPR002644">
    <property type="entry name" value="PSII_PsbZ"/>
</dbReference>
<dbReference type="InterPro" id="IPR036512">
    <property type="entry name" value="PSII_PsbZ_sf"/>
</dbReference>
<dbReference type="NCBIfam" id="TIGR03043">
    <property type="entry name" value="PS_II_psbZ"/>
    <property type="match status" value="1"/>
</dbReference>
<dbReference type="PANTHER" id="PTHR34971">
    <property type="entry name" value="PHOTOSYSTEM II REACTION CENTER PROTEIN Z"/>
    <property type="match status" value="1"/>
</dbReference>
<dbReference type="PANTHER" id="PTHR34971:SF2">
    <property type="entry name" value="PHOTOSYSTEM II REACTION CENTER PROTEIN Z"/>
    <property type="match status" value="1"/>
</dbReference>
<dbReference type="Pfam" id="PF01737">
    <property type="entry name" value="Ycf9"/>
    <property type="match status" value="1"/>
</dbReference>
<dbReference type="SUPFAM" id="SSF161055">
    <property type="entry name" value="PsbZ-like"/>
    <property type="match status" value="1"/>
</dbReference>